<accession>B2ZX90</accession>
<accession>A0A0P0VBQ0</accession>
<accession>Q0JGY5</accession>
<accession>Q8L4A0</accession>
<accession>Q8L4V5</accession>
<name>FAS1_ORYSJ</name>
<reference key="1">
    <citation type="journal article" date="2008" name="Dev. Biol.">
        <title>The rice flattened shoot meristem, encoding CAF-1 p150 subunit, is required for meristem maintenance by regulating the cell-cycle period.</title>
        <authorList>
            <person name="Abe M."/>
            <person name="Kuroshita H."/>
            <person name="Umeda M."/>
            <person name="Itoh J."/>
            <person name="Nagato Y."/>
        </authorList>
    </citation>
    <scope>NUCLEOTIDE SEQUENCE [MRNA]</scope>
    <scope>FUNCTION</scope>
    <scope>TISSUE SPECIFICITY</scope>
    <scope>INDUCTION</scope>
    <scope>DISRUPTION PHENOTYPE</scope>
    <source>
        <strain>cv. Nipponbare</strain>
    </source>
</reference>
<reference key="2">
    <citation type="journal article" date="2002" name="Nature">
        <title>The genome sequence and structure of rice chromosome 1.</title>
        <authorList>
            <person name="Sasaki T."/>
            <person name="Matsumoto T."/>
            <person name="Yamamoto K."/>
            <person name="Sakata K."/>
            <person name="Baba T."/>
            <person name="Katayose Y."/>
            <person name="Wu J."/>
            <person name="Niimura Y."/>
            <person name="Cheng Z."/>
            <person name="Nagamura Y."/>
            <person name="Antonio B.A."/>
            <person name="Kanamori H."/>
            <person name="Hosokawa S."/>
            <person name="Masukawa M."/>
            <person name="Arikawa K."/>
            <person name="Chiden Y."/>
            <person name="Hayashi M."/>
            <person name="Okamoto M."/>
            <person name="Ando T."/>
            <person name="Aoki H."/>
            <person name="Arita K."/>
            <person name="Hamada M."/>
            <person name="Harada C."/>
            <person name="Hijishita S."/>
            <person name="Honda M."/>
            <person name="Ichikawa Y."/>
            <person name="Idonuma A."/>
            <person name="Iijima M."/>
            <person name="Ikeda M."/>
            <person name="Ikeno M."/>
            <person name="Ito S."/>
            <person name="Ito T."/>
            <person name="Ito Y."/>
            <person name="Ito Y."/>
            <person name="Iwabuchi A."/>
            <person name="Kamiya K."/>
            <person name="Karasawa W."/>
            <person name="Katagiri S."/>
            <person name="Kikuta A."/>
            <person name="Kobayashi N."/>
            <person name="Kono I."/>
            <person name="Machita K."/>
            <person name="Maehara T."/>
            <person name="Mizuno H."/>
            <person name="Mizubayashi T."/>
            <person name="Mukai Y."/>
            <person name="Nagasaki H."/>
            <person name="Nakashima M."/>
            <person name="Nakama Y."/>
            <person name="Nakamichi Y."/>
            <person name="Nakamura M."/>
            <person name="Namiki N."/>
            <person name="Negishi M."/>
            <person name="Ohta I."/>
            <person name="Ono N."/>
            <person name="Saji S."/>
            <person name="Sakai K."/>
            <person name="Shibata M."/>
            <person name="Shimokawa T."/>
            <person name="Shomura A."/>
            <person name="Song J."/>
            <person name="Takazaki Y."/>
            <person name="Terasawa K."/>
            <person name="Tsuji K."/>
            <person name="Waki K."/>
            <person name="Yamagata H."/>
            <person name="Yamane H."/>
            <person name="Yoshiki S."/>
            <person name="Yoshihara R."/>
            <person name="Yukawa K."/>
            <person name="Zhong H."/>
            <person name="Iwama H."/>
            <person name="Endo T."/>
            <person name="Ito H."/>
            <person name="Hahn J.H."/>
            <person name="Kim H.-I."/>
            <person name="Eun M.-Y."/>
            <person name="Yano M."/>
            <person name="Jiang J."/>
            <person name="Gojobori T."/>
        </authorList>
    </citation>
    <scope>NUCLEOTIDE SEQUENCE [LARGE SCALE GENOMIC DNA]</scope>
    <source>
        <strain>cv. Nipponbare</strain>
    </source>
</reference>
<reference key="3">
    <citation type="journal article" date="2005" name="Nature">
        <title>The map-based sequence of the rice genome.</title>
        <authorList>
            <consortium name="International rice genome sequencing project (IRGSP)"/>
        </authorList>
    </citation>
    <scope>NUCLEOTIDE SEQUENCE [LARGE SCALE GENOMIC DNA]</scope>
    <source>
        <strain>cv. Nipponbare</strain>
    </source>
</reference>
<reference key="4">
    <citation type="journal article" date="2008" name="Nucleic Acids Res.">
        <title>The rice annotation project database (RAP-DB): 2008 update.</title>
        <authorList>
            <consortium name="The rice annotation project (RAP)"/>
        </authorList>
    </citation>
    <scope>GENOME REANNOTATION</scope>
    <source>
        <strain>cv. Nipponbare</strain>
    </source>
</reference>
<reference key="5">
    <citation type="journal article" date="2013" name="Rice">
        <title>Improvement of the Oryza sativa Nipponbare reference genome using next generation sequence and optical map data.</title>
        <authorList>
            <person name="Kawahara Y."/>
            <person name="de la Bastide M."/>
            <person name="Hamilton J.P."/>
            <person name="Kanamori H."/>
            <person name="McCombie W.R."/>
            <person name="Ouyang S."/>
            <person name="Schwartz D.C."/>
            <person name="Tanaka T."/>
            <person name="Wu J."/>
            <person name="Zhou S."/>
            <person name="Childs K.L."/>
            <person name="Davidson R.M."/>
            <person name="Lin H."/>
            <person name="Quesada-Ocampo L."/>
            <person name="Vaillancourt B."/>
            <person name="Sakai H."/>
            <person name="Lee S.S."/>
            <person name="Kim J."/>
            <person name="Numa H."/>
            <person name="Itoh T."/>
            <person name="Buell C.R."/>
            <person name="Matsumoto T."/>
        </authorList>
    </citation>
    <scope>GENOME REANNOTATION</scope>
    <source>
        <strain>cv. Nipponbare</strain>
    </source>
</reference>
<organism>
    <name type="scientific">Oryza sativa subsp. japonica</name>
    <name type="common">Rice</name>
    <dbReference type="NCBI Taxonomy" id="39947"/>
    <lineage>
        <taxon>Eukaryota</taxon>
        <taxon>Viridiplantae</taxon>
        <taxon>Streptophyta</taxon>
        <taxon>Embryophyta</taxon>
        <taxon>Tracheophyta</taxon>
        <taxon>Spermatophyta</taxon>
        <taxon>Magnoliopsida</taxon>
        <taxon>Liliopsida</taxon>
        <taxon>Poales</taxon>
        <taxon>Poaceae</taxon>
        <taxon>BOP clade</taxon>
        <taxon>Oryzoideae</taxon>
        <taxon>Oryzeae</taxon>
        <taxon>Oryzinae</taxon>
        <taxon>Oryza</taxon>
        <taxon>Oryza sativa</taxon>
    </lineage>
</organism>
<sequence length="940" mass="105465">MEGGKLLGVAHPEPANNIDADLRYDLGQSRMQVDGPVVLNRSAELEPSDSMAIDDVPVEASSQPAPAKQSPALMDTIVEVQKQLKRKRASSGPALAAADKDALVAGCCQELEGLLEYYREVSGHRMQFEVGNLSTNAAIGCLLEESSLGLSKLVDEIYEKLKGMEGVSATSVRSSVLLIGQRMMYGQSSPDADVLEDESETALWCWEVRDLKVIPLRMRGPLSTRRTARKKIHERITAIYSTLSVLEAPGAEAQVNDMRKASLKLSKALNLEGIKSLVERATQKSNIERGAKNTGSTAKEPMQEMVKSNNDTGIIENVDDSQLQKNTSTNEKDTQKAQKQVEKELKQKEKEEARMRKQQKKQQEEALREQKRREKEEAEMKKQQRKQEEEAQKEQKRREKEEAETRKQQKKQQEEAEKEQKRREKEAVQLKKQLAIQKQASMMERFFKNKKDSEKLEKPGGKDSGVQTTDPCTTNKEVVPLVTSIIDSSFSQKENWALEDLRRLQISGWQKLSSYNRSSRWGIRNKPKKEAFKELKLQKTSDNMLEEILSPNEDTCHNLSQENEPDKSANDVDMLPAVELQFHGTNHANPLPTRSIKRKLLQFDKSNRPAYYGTWRKKSAVVGPRCPLKMDPDLDYEVDSDDEWEEEDPGESLSDCEKDNDEVMEEDSKITDEESEDSFFVPDGYLSDNEGIQIESLLDDKDEASSSPPDQCAEVEEFRALLRQQKVLNTLTEQALRKSQPLVISNLTHEKAELLTAGDLKGTSKIEQLCLQVLSMRICPGGATIDLPVIDSSSANAEETNQLNVKSSPAAASAIPDTDLAEIVKVIGSCRDGINKLVESLHQKFPNVSKSQLKNKVREISEFVDNRWQVKKEVLSKLGLSSSPASSKKPKSIATYFSKRCLPPEEAILASPELRLKSKTTQNVNGDTDIPRINLLPSSQ</sequence>
<comment type="function">
    <text evidence="4">Component of the chromatin assembly factor complex (CAF-1) involved in chromatin assembly following DNA replication and DNA repair. Required for several aspects of development, including apical meristem maintenance by regulating the durations of the S- and G2-phases of the cell cycle through its chromatin assembly activity.</text>
</comment>
<comment type="subunit">
    <text evidence="1">Component of the chromatin assembly factor 1 (CAF-1) complex, composed of FSM (FAS1), FAS2 and MSI1.</text>
</comment>
<comment type="subcellular location">
    <subcellularLocation>
        <location evidence="1">Nucleus</location>
    </subcellularLocation>
</comment>
<comment type="tissue specificity">
    <text evidence="4">In embryo, expressed in leaf primordia, coleoptile and radicle. In seedlings, expressed in cell division zone of roots, SAM and leaf primordia. Expressed in floral organ primordia.</text>
</comment>
<comment type="induction">
    <text evidence="4">Cell cycle-regulated, showing a peak in the G1-phase.</text>
</comment>
<comment type="disruption phenotype">
    <text evidence="4">Dwarf and weak seedling that dies during vegetative phase.</text>
</comment>
<comment type="similarity">
    <text evidence="5">Belongs to the CHAF1A family.</text>
</comment>
<comment type="sequence caution" evidence="5">
    <conflict type="erroneous gene model prediction">
        <sequence resource="EMBL-CDS" id="BAC06267"/>
    </conflict>
    <text>Was originally thought to correspond to two different genes.</text>
</comment>
<comment type="sequence caution" evidence="5">
    <conflict type="erroneous gene model prediction">
        <sequence resource="EMBL-CDS" id="BAC06268"/>
    </conflict>
    <text>Was originally thought to correspond to two different genes.</text>
</comment>
<comment type="sequence caution" evidence="5">
    <conflict type="erroneous gene model prediction">
        <sequence resource="EMBL-CDS" id="BAF06993"/>
    </conflict>
</comment>
<proteinExistence type="evidence at transcript level"/>
<dbReference type="EMBL" id="AB360550">
    <property type="protein sequence ID" value="BAG48199.1"/>
    <property type="molecule type" value="mRNA"/>
</dbReference>
<dbReference type="EMBL" id="AP003316">
    <property type="protein sequence ID" value="BAC06267.1"/>
    <property type="status" value="ALT_SEQ"/>
    <property type="molecule type" value="Genomic_DNA"/>
</dbReference>
<dbReference type="EMBL" id="AP003316">
    <property type="protein sequence ID" value="BAC06268.1"/>
    <property type="status" value="ALT_SEQ"/>
    <property type="molecule type" value="Genomic_DNA"/>
</dbReference>
<dbReference type="EMBL" id="AP008207">
    <property type="protein sequence ID" value="BAF06993.1"/>
    <property type="status" value="ALT_SEQ"/>
    <property type="molecule type" value="Genomic_DNA"/>
</dbReference>
<dbReference type="EMBL" id="AP014957">
    <property type="protein sequence ID" value="BAS75701.1"/>
    <property type="molecule type" value="Genomic_DNA"/>
</dbReference>
<dbReference type="RefSeq" id="XP_015621605.1">
    <property type="nucleotide sequence ID" value="XM_015766119.1"/>
</dbReference>
<dbReference type="RefSeq" id="XP_015621607.1">
    <property type="nucleotide sequence ID" value="XM_015766121.1"/>
</dbReference>
<dbReference type="SMR" id="B2ZX90"/>
<dbReference type="FunCoup" id="B2ZX90">
    <property type="interactions" value="485"/>
</dbReference>
<dbReference type="STRING" id="39947.B2ZX90"/>
<dbReference type="PaxDb" id="39947-B2ZX90"/>
<dbReference type="EnsemblPlants" id="Os01t0896300-01">
    <property type="protein sequence ID" value="Os01t0896300-01"/>
    <property type="gene ID" value="Os01g0896300"/>
</dbReference>
<dbReference type="GeneID" id="4324973"/>
<dbReference type="Gramene" id="Os01t0896300-01">
    <property type="protein sequence ID" value="Os01t0896300-01"/>
    <property type="gene ID" value="Os01g0896300"/>
</dbReference>
<dbReference type="KEGG" id="dosa:Os01g0896300"/>
<dbReference type="KEGG" id="osa:4324973"/>
<dbReference type="eggNOG" id="KOG4364">
    <property type="taxonomic scope" value="Eukaryota"/>
</dbReference>
<dbReference type="HOGENOM" id="CLU_011512_0_0_1"/>
<dbReference type="InParanoid" id="B2ZX90"/>
<dbReference type="OMA" id="SETALWC"/>
<dbReference type="OrthoDB" id="440676at2759"/>
<dbReference type="PlantReactome" id="R-OSA-9030680">
    <property type="pathway name" value="Crown root development"/>
</dbReference>
<dbReference type="Proteomes" id="UP000000763">
    <property type="component" value="Chromosome 1"/>
</dbReference>
<dbReference type="Proteomes" id="UP000059680">
    <property type="component" value="Chromosome 1"/>
</dbReference>
<dbReference type="GO" id="GO:0033186">
    <property type="term" value="C:CAF-1 complex"/>
    <property type="evidence" value="ECO:0000318"/>
    <property type="project" value="GO_Central"/>
</dbReference>
<dbReference type="GO" id="GO:0005634">
    <property type="term" value="C:nucleus"/>
    <property type="evidence" value="ECO:0000318"/>
    <property type="project" value="GO_Central"/>
</dbReference>
<dbReference type="GO" id="GO:0006310">
    <property type="term" value="P:DNA recombination"/>
    <property type="evidence" value="ECO:0007669"/>
    <property type="project" value="UniProtKB-KW"/>
</dbReference>
<dbReference type="GO" id="GO:0006281">
    <property type="term" value="P:DNA repair"/>
    <property type="evidence" value="ECO:0007669"/>
    <property type="project" value="UniProtKB-KW"/>
</dbReference>
<dbReference type="GO" id="GO:0044772">
    <property type="term" value="P:mitotic cell cycle phase transition"/>
    <property type="evidence" value="ECO:0000304"/>
    <property type="project" value="UniProtKB"/>
</dbReference>
<dbReference type="GO" id="GO:0006334">
    <property type="term" value="P:nucleosome assembly"/>
    <property type="evidence" value="ECO:0000318"/>
    <property type="project" value="GO_Central"/>
</dbReference>
<dbReference type="GO" id="GO:0010389">
    <property type="term" value="P:regulation of G2/M transition of mitotic cell cycle"/>
    <property type="evidence" value="ECO:0000304"/>
    <property type="project" value="UniProtKB"/>
</dbReference>
<dbReference type="GO" id="GO:0010449">
    <property type="term" value="P:root meristem growth"/>
    <property type="evidence" value="ECO:0000315"/>
    <property type="project" value="UniProtKB"/>
</dbReference>
<dbReference type="GO" id="GO:0010448">
    <property type="term" value="P:vegetative meristem growth"/>
    <property type="evidence" value="ECO:0000315"/>
    <property type="project" value="UniProtKB"/>
</dbReference>
<dbReference type="InterPro" id="IPR048800">
    <property type="entry name" value="Cac1-like_C"/>
</dbReference>
<dbReference type="InterPro" id="IPR022043">
    <property type="entry name" value="CAF1A_DD"/>
</dbReference>
<dbReference type="PANTHER" id="PTHR15272:SF0">
    <property type="entry name" value="CHROMATIN ASSEMBLY FACTOR 1 SUBUNIT A"/>
    <property type="match status" value="1"/>
</dbReference>
<dbReference type="PANTHER" id="PTHR15272">
    <property type="entry name" value="CHROMATIN ASSEMBLY FACTOR 1 SUBUNIT A CAF-1 SUBUNIT A"/>
    <property type="match status" value="1"/>
</dbReference>
<dbReference type="Pfam" id="PF21796">
    <property type="entry name" value="Cac1_C"/>
    <property type="match status" value="1"/>
</dbReference>
<dbReference type="Pfam" id="PF12253">
    <property type="entry name" value="CAF1A_dimeriz"/>
    <property type="match status" value="1"/>
</dbReference>
<feature type="chain" id="PRO_0000420144" description="Chromatin assembly factor 1 subunit FSM">
    <location>
        <begin position="1"/>
        <end position="940"/>
    </location>
</feature>
<feature type="region of interest" description="Disordered" evidence="3">
    <location>
        <begin position="317"/>
        <end position="473"/>
    </location>
</feature>
<feature type="region of interest" description="Disordered" evidence="3">
    <location>
        <begin position="638"/>
        <end position="682"/>
    </location>
</feature>
<feature type="region of interest" description="Disordered" evidence="3">
    <location>
        <begin position="919"/>
        <end position="940"/>
    </location>
</feature>
<feature type="coiled-coil region" evidence="2">
    <location>
        <begin position="329"/>
        <end position="439"/>
    </location>
</feature>
<feature type="compositionally biased region" description="Polar residues" evidence="3">
    <location>
        <begin position="320"/>
        <end position="329"/>
    </location>
</feature>
<feature type="compositionally biased region" description="Basic and acidic residues" evidence="3">
    <location>
        <begin position="330"/>
        <end position="429"/>
    </location>
</feature>
<feature type="compositionally biased region" description="Low complexity" evidence="3">
    <location>
        <begin position="430"/>
        <end position="440"/>
    </location>
</feature>
<feature type="compositionally biased region" description="Basic and acidic residues" evidence="3">
    <location>
        <begin position="445"/>
        <end position="461"/>
    </location>
</feature>
<feature type="compositionally biased region" description="Acidic residues" evidence="3">
    <location>
        <begin position="638"/>
        <end position="650"/>
    </location>
</feature>
<gene>
    <name type="primary">FSM</name>
    <name type="ordered locus">Os01g0896300</name>
    <name type="ordered locus">LOC_Os01g67100</name>
    <name type="ORF">P0696G06.24</name>
    <name type="ORF">P0696G06.25</name>
</gene>
<evidence type="ECO:0000250" key="1"/>
<evidence type="ECO:0000255" key="2"/>
<evidence type="ECO:0000256" key="3">
    <source>
        <dbReference type="SAM" id="MobiDB-lite"/>
    </source>
</evidence>
<evidence type="ECO:0000269" key="4">
    <source>
    </source>
</evidence>
<evidence type="ECO:0000305" key="5"/>
<protein>
    <recommendedName>
        <fullName>Chromatin assembly factor 1 subunit FSM</fullName>
        <shortName>CAF-1 subunit FSM</shortName>
    </recommendedName>
    <alternativeName>
        <fullName>CAF-1 p150 homolog</fullName>
    </alternativeName>
    <alternativeName>
        <fullName>Protein FASCIATA 1 homolog</fullName>
    </alternativeName>
    <alternativeName>
        <fullName>Protein FLATTENED SHOOT MERISTEM</fullName>
    </alternativeName>
</protein>
<keyword id="KW-0156">Chromatin regulator</keyword>
<keyword id="KW-0175">Coiled coil</keyword>
<keyword id="KW-0227">DNA damage</keyword>
<keyword id="KW-0233">DNA recombination</keyword>
<keyword id="KW-0234">DNA repair</keyword>
<keyword id="KW-0539">Nucleus</keyword>
<keyword id="KW-1185">Reference proteome</keyword>
<keyword id="KW-0804">Transcription</keyword>
<keyword id="KW-0805">Transcription regulation</keyword>